<comment type="function">
    <text evidence="1">Binds directly to 16S ribosomal RNA.</text>
</comment>
<comment type="similarity">
    <text evidence="1">Belongs to the bacterial ribosomal protein bS20 family.</text>
</comment>
<protein>
    <recommendedName>
        <fullName evidence="1">Small ribosomal subunit protein bS20</fullName>
    </recommendedName>
    <alternativeName>
        <fullName evidence="3">30S ribosomal protein S20</fullName>
    </alternativeName>
</protein>
<reference key="1">
    <citation type="journal article" date="2002" name="Nucleic Acids Res.">
        <title>The complete genomic sequence of Mycoplasma penetrans, an intracellular bacterial pathogen in humans.</title>
        <authorList>
            <person name="Sasaki Y."/>
            <person name="Ishikawa J."/>
            <person name="Yamashita A."/>
            <person name="Oshima K."/>
            <person name="Kenri T."/>
            <person name="Furuya K."/>
            <person name="Yoshino C."/>
            <person name="Horino A."/>
            <person name="Shiba T."/>
            <person name="Sasaki T."/>
            <person name="Hattori M."/>
        </authorList>
    </citation>
    <scope>NUCLEOTIDE SEQUENCE [LARGE SCALE GENOMIC DNA]</scope>
    <source>
        <strain>HF-2</strain>
    </source>
</reference>
<dbReference type="EMBL" id="BA000026">
    <property type="protein sequence ID" value="BAC43838.1"/>
    <property type="molecule type" value="Genomic_DNA"/>
</dbReference>
<dbReference type="RefSeq" id="WP_011076874.1">
    <property type="nucleotide sequence ID" value="NC_004432.1"/>
</dbReference>
<dbReference type="SMR" id="Q8EX02"/>
<dbReference type="FunCoup" id="Q8EX02">
    <property type="interactions" value="171"/>
</dbReference>
<dbReference type="STRING" id="272633.gene:10731139"/>
<dbReference type="KEGG" id="mpe:MYPE480"/>
<dbReference type="HOGENOM" id="CLU_2634284_0_0_14"/>
<dbReference type="InParanoid" id="Q8EX02"/>
<dbReference type="Proteomes" id="UP000002522">
    <property type="component" value="Chromosome"/>
</dbReference>
<dbReference type="GO" id="GO:1990904">
    <property type="term" value="C:ribonucleoprotein complex"/>
    <property type="evidence" value="ECO:0007669"/>
    <property type="project" value="UniProtKB-KW"/>
</dbReference>
<dbReference type="GO" id="GO:0005840">
    <property type="term" value="C:ribosome"/>
    <property type="evidence" value="ECO:0007669"/>
    <property type="project" value="UniProtKB-KW"/>
</dbReference>
<dbReference type="GO" id="GO:0019843">
    <property type="term" value="F:rRNA binding"/>
    <property type="evidence" value="ECO:0007669"/>
    <property type="project" value="UniProtKB-UniRule"/>
</dbReference>
<dbReference type="GO" id="GO:0003735">
    <property type="term" value="F:structural constituent of ribosome"/>
    <property type="evidence" value="ECO:0007669"/>
    <property type="project" value="InterPro"/>
</dbReference>
<dbReference type="GO" id="GO:0006412">
    <property type="term" value="P:translation"/>
    <property type="evidence" value="ECO:0007669"/>
    <property type="project" value="UniProtKB-UniRule"/>
</dbReference>
<dbReference type="Gene3D" id="1.20.58.110">
    <property type="entry name" value="Ribosomal protein S20"/>
    <property type="match status" value="1"/>
</dbReference>
<dbReference type="HAMAP" id="MF_00500">
    <property type="entry name" value="Ribosomal_bS20"/>
    <property type="match status" value="1"/>
</dbReference>
<dbReference type="InterPro" id="IPR002583">
    <property type="entry name" value="Ribosomal_bS20"/>
</dbReference>
<dbReference type="InterPro" id="IPR036510">
    <property type="entry name" value="Ribosomal_bS20_sf"/>
</dbReference>
<dbReference type="NCBIfam" id="TIGR00029">
    <property type="entry name" value="S20"/>
    <property type="match status" value="1"/>
</dbReference>
<dbReference type="Pfam" id="PF01649">
    <property type="entry name" value="Ribosomal_S20p"/>
    <property type="match status" value="1"/>
</dbReference>
<dbReference type="SUPFAM" id="SSF46992">
    <property type="entry name" value="Ribosomal protein S20"/>
    <property type="match status" value="1"/>
</dbReference>
<proteinExistence type="inferred from homology"/>
<name>RS20_MALP2</name>
<gene>
    <name evidence="1" type="primary">rpsT</name>
    <name type="ordered locus">MYPE480</name>
</gene>
<sequence>MANIKSNLKRNKQNRARHTVVHSQTSAVKTQIKKTQASKSQKDLSLAYKKIDSALAKGIIKQNKADRLKSRLALNVAR</sequence>
<evidence type="ECO:0000255" key="1">
    <source>
        <dbReference type="HAMAP-Rule" id="MF_00500"/>
    </source>
</evidence>
<evidence type="ECO:0000256" key="2">
    <source>
        <dbReference type="SAM" id="MobiDB-lite"/>
    </source>
</evidence>
<evidence type="ECO:0000305" key="3"/>
<keyword id="KW-1185">Reference proteome</keyword>
<keyword id="KW-0687">Ribonucleoprotein</keyword>
<keyword id="KW-0689">Ribosomal protein</keyword>
<keyword id="KW-0694">RNA-binding</keyword>
<keyword id="KW-0699">rRNA-binding</keyword>
<accession>Q8EX02</accession>
<feature type="chain" id="PRO_0000260127" description="Small ribosomal subunit protein bS20">
    <location>
        <begin position="1"/>
        <end position="78"/>
    </location>
</feature>
<feature type="region of interest" description="Disordered" evidence="2">
    <location>
        <begin position="1"/>
        <end position="34"/>
    </location>
</feature>
<feature type="compositionally biased region" description="Basic residues" evidence="2">
    <location>
        <begin position="7"/>
        <end position="20"/>
    </location>
</feature>
<feature type="compositionally biased region" description="Polar residues" evidence="2">
    <location>
        <begin position="21"/>
        <end position="34"/>
    </location>
</feature>
<organism>
    <name type="scientific">Malacoplasma penetrans (strain HF-2)</name>
    <name type="common">Mycoplasma penetrans</name>
    <dbReference type="NCBI Taxonomy" id="272633"/>
    <lineage>
        <taxon>Bacteria</taxon>
        <taxon>Bacillati</taxon>
        <taxon>Mycoplasmatota</taxon>
        <taxon>Mycoplasmoidales</taxon>
        <taxon>Mycoplasmoidaceae</taxon>
        <taxon>Malacoplasma</taxon>
    </lineage>
</organism>